<accession>A9L331</accession>
<evidence type="ECO:0000255" key="1">
    <source>
        <dbReference type="HAMAP-Rule" id="MF_00272"/>
    </source>
</evidence>
<evidence type="ECO:0000255" key="2">
    <source>
        <dbReference type="PROSITE-ProRule" id="PRU01066"/>
    </source>
</evidence>
<name>GCSH_SHEB9</name>
<proteinExistence type="inferred from homology"/>
<keyword id="KW-0450">Lipoyl</keyword>
<comment type="function">
    <text evidence="1">The glycine cleavage system catalyzes the degradation of glycine. The H protein shuttles the methylamine group of glycine from the P protein to the T protein.</text>
</comment>
<comment type="cofactor">
    <cofactor evidence="1">
        <name>(R)-lipoate</name>
        <dbReference type="ChEBI" id="CHEBI:83088"/>
    </cofactor>
    <text evidence="1">Binds 1 lipoyl cofactor covalently.</text>
</comment>
<comment type="subunit">
    <text evidence="1">The glycine cleavage system is composed of four proteins: P, T, L and H.</text>
</comment>
<comment type="similarity">
    <text evidence="1">Belongs to the GcvH family.</text>
</comment>
<feature type="chain" id="PRO_1000078739" description="Glycine cleavage system H protein">
    <location>
        <begin position="1"/>
        <end position="129"/>
    </location>
</feature>
<feature type="domain" description="Lipoyl-binding" evidence="2">
    <location>
        <begin position="24"/>
        <end position="106"/>
    </location>
</feature>
<feature type="modified residue" description="N6-lipoyllysine" evidence="1">
    <location>
        <position position="65"/>
    </location>
</feature>
<sequence>MSNIPTELKYASSHEWIRKEEDGSYTVGITEHAQELLGDMVFVELPEVGDTVTAGEDCAVAESVKAASDIYAPISGEVIAVNEALEDSPELVNSSAYGEGWFFRVMPSDESEVDALLDAEGYQAVIDED</sequence>
<protein>
    <recommendedName>
        <fullName evidence="1">Glycine cleavage system H protein</fullName>
    </recommendedName>
</protein>
<gene>
    <name evidence="1" type="primary">gcvH</name>
    <name type="ordered locus">Sbal195_3800</name>
</gene>
<organism>
    <name type="scientific">Shewanella baltica (strain OS195)</name>
    <dbReference type="NCBI Taxonomy" id="399599"/>
    <lineage>
        <taxon>Bacteria</taxon>
        <taxon>Pseudomonadati</taxon>
        <taxon>Pseudomonadota</taxon>
        <taxon>Gammaproteobacteria</taxon>
        <taxon>Alteromonadales</taxon>
        <taxon>Shewanellaceae</taxon>
        <taxon>Shewanella</taxon>
    </lineage>
</organism>
<reference key="1">
    <citation type="submission" date="2007-11" db="EMBL/GenBank/DDBJ databases">
        <title>Complete sequence of chromosome of Shewanella baltica OS195.</title>
        <authorList>
            <consortium name="US DOE Joint Genome Institute"/>
            <person name="Copeland A."/>
            <person name="Lucas S."/>
            <person name="Lapidus A."/>
            <person name="Barry K."/>
            <person name="Glavina del Rio T."/>
            <person name="Dalin E."/>
            <person name="Tice H."/>
            <person name="Pitluck S."/>
            <person name="Chain P."/>
            <person name="Malfatti S."/>
            <person name="Shin M."/>
            <person name="Vergez L."/>
            <person name="Schmutz J."/>
            <person name="Larimer F."/>
            <person name="Land M."/>
            <person name="Hauser L."/>
            <person name="Kyrpides N."/>
            <person name="Kim E."/>
            <person name="Brettar I."/>
            <person name="Rodrigues J."/>
            <person name="Konstantinidis K."/>
            <person name="Klappenbach J."/>
            <person name="Hofle M."/>
            <person name="Tiedje J."/>
            <person name="Richardson P."/>
        </authorList>
    </citation>
    <scope>NUCLEOTIDE SEQUENCE [LARGE SCALE GENOMIC DNA]</scope>
    <source>
        <strain>OS195</strain>
    </source>
</reference>
<dbReference type="EMBL" id="CP000891">
    <property type="protein sequence ID" value="ABX50960.1"/>
    <property type="molecule type" value="Genomic_DNA"/>
</dbReference>
<dbReference type="RefSeq" id="WP_006080188.1">
    <property type="nucleotide sequence ID" value="NC_009997.1"/>
</dbReference>
<dbReference type="SMR" id="A9L331"/>
<dbReference type="GeneID" id="11773816"/>
<dbReference type="KEGG" id="sbn:Sbal195_3800"/>
<dbReference type="HOGENOM" id="CLU_097408_2_1_6"/>
<dbReference type="Proteomes" id="UP000000770">
    <property type="component" value="Chromosome"/>
</dbReference>
<dbReference type="GO" id="GO:0005829">
    <property type="term" value="C:cytosol"/>
    <property type="evidence" value="ECO:0007669"/>
    <property type="project" value="TreeGrafter"/>
</dbReference>
<dbReference type="GO" id="GO:0005960">
    <property type="term" value="C:glycine cleavage complex"/>
    <property type="evidence" value="ECO:0007669"/>
    <property type="project" value="InterPro"/>
</dbReference>
<dbReference type="GO" id="GO:0019464">
    <property type="term" value="P:glycine decarboxylation via glycine cleavage system"/>
    <property type="evidence" value="ECO:0007669"/>
    <property type="project" value="UniProtKB-UniRule"/>
</dbReference>
<dbReference type="CDD" id="cd06848">
    <property type="entry name" value="GCS_H"/>
    <property type="match status" value="1"/>
</dbReference>
<dbReference type="FunFam" id="2.40.50.100:FF:000011">
    <property type="entry name" value="Glycine cleavage system H protein"/>
    <property type="match status" value="1"/>
</dbReference>
<dbReference type="Gene3D" id="2.40.50.100">
    <property type="match status" value="1"/>
</dbReference>
<dbReference type="HAMAP" id="MF_00272">
    <property type="entry name" value="GcvH"/>
    <property type="match status" value="1"/>
</dbReference>
<dbReference type="InterPro" id="IPR003016">
    <property type="entry name" value="2-oxoA_DH_lipoyl-BS"/>
</dbReference>
<dbReference type="InterPro" id="IPR000089">
    <property type="entry name" value="Biotin_lipoyl"/>
</dbReference>
<dbReference type="InterPro" id="IPR002930">
    <property type="entry name" value="GCV_H"/>
</dbReference>
<dbReference type="InterPro" id="IPR033753">
    <property type="entry name" value="GCV_H/Fam206"/>
</dbReference>
<dbReference type="InterPro" id="IPR017453">
    <property type="entry name" value="GCV_H_sub"/>
</dbReference>
<dbReference type="InterPro" id="IPR011053">
    <property type="entry name" value="Single_hybrid_motif"/>
</dbReference>
<dbReference type="NCBIfam" id="TIGR00527">
    <property type="entry name" value="gcvH"/>
    <property type="match status" value="1"/>
</dbReference>
<dbReference type="NCBIfam" id="NF002270">
    <property type="entry name" value="PRK01202.1"/>
    <property type="match status" value="1"/>
</dbReference>
<dbReference type="PANTHER" id="PTHR11715">
    <property type="entry name" value="GLYCINE CLEAVAGE SYSTEM H PROTEIN"/>
    <property type="match status" value="1"/>
</dbReference>
<dbReference type="PANTHER" id="PTHR11715:SF3">
    <property type="entry name" value="GLYCINE CLEAVAGE SYSTEM H PROTEIN-RELATED"/>
    <property type="match status" value="1"/>
</dbReference>
<dbReference type="Pfam" id="PF01597">
    <property type="entry name" value="GCV_H"/>
    <property type="match status" value="1"/>
</dbReference>
<dbReference type="SUPFAM" id="SSF51230">
    <property type="entry name" value="Single hybrid motif"/>
    <property type="match status" value="1"/>
</dbReference>
<dbReference type="PROSITE" id="PS50968">
    <property type="entry name" value="BIOTINYL_LIPOYL"/>
    <property type="match status" value="1"/>
</dbReference>
<dbReference type="PROSITE" id="PS00189">
    <property type="entry name" value="LIPOYL"/>
    <property type="match status" value="1"/>
</dbReference>